<gene>
    <name type="primary">sgcA</name>
    <name type="synonym">yjhL</name>
    <name type="ordered locus">b4302</name>
    <name type="ordered locus">JW4264</name>
</gene>
<name>SGCA_ECOLI</name>
<organism>
    <name type="scientific">Escherichia coli (strain K12)</name>
    <dbReference type="NCBI Taxonomy" id="83333"/>
    <lineage>
        <taxon>Bacteria</taxon>
        <taxon>Pseudomonadati</taxon>
        <taxon>Pseudomonadota</taxon>
        <taxon>Gammaproteobacteria</taxon>
        <taxon>Enterobacterales</taxon>
        <taxon>Enterobacteriaceae</taxon>
        <taxon>Escherichia</taxon>
    </lineage>
</organism>
<dbReference type="EMBL" id="U14003">
    <property type="protein sequence ID" value="AAA97198.1"/>
    <property type="molecule type" value="Genomic_DNA"/>
</dbReference>
<dbReference type="EMBL" id="U00096">
    <property type="protein sequence ID" value="AAC77258.1"/>
    <property type="molecule type" value="Genomic_DNA"/>
</dbReference>
<dbReference type="EMBL" id="AP009048">
    <property type="protein sequence ID" value="BAE78293.1"/>
    <property type="molecule type" value="Genomic_DNA"/>
</dbReference>
<dbReference type="PIR" id="H65243">
    <property type="entry name" value="H65243"/>
</dbReference>
<dbReference type="RefSeq" id="NP_418722.1">
    <property type="nucleotide sequence ID" value="NC_000913.3"/>
</dbReference>
<dbReference type="RefSeq" id="WP_000606406.1">
    <property type="nucleotide sequence ID" value="NZ_SSUV01000012.1"/>
</dbReference>
<dbReference type="SMR" id="P39363"/>
<dbReference type="BioGRID" id="4261489">
    <property type="interactions" value="8"/>
</dbReference>
<dbReference type="BioGRID" id="853111">
    <property type="interactions" value="5"/>
</dbReference>
<dbReference type="ComplexPortal" id="CPX-5990">
    <property type="entry name" value="sgcABC sugar permease enzyme II complex"/>
</dbReference>
<dbReference type="FunCoup" id="P39363">
    <property type="interactions" value="77"/>
</dbReference>
<dbReference type="IntAct" id="P39363">
    <property type="interactions" value="7"/>
</dbReference>
<dbReference type="STRING" id="511145.b4302"/>
<dbReference type="TCDB" id="4.A.5.1.3">
    <property type="family name" value="the pts galactitol (gat) family"/>
</dbReference>
<dbReference type="jPOST" id="P39363"/>
<dbReference type="PaxDb" id="511145-b4302"/>
<dbReference type="EnsemblBacteria" id="AAC77258">
    <property type="protein sequence ID" value="AAC77258"/>
    <property type="gene ID" value="b4302"/>
</dbReference>
<dbReference type="GeneID" id="948831"/>
<dbReference type="KEGG" id="ecj:JW4264"/>
<dbReference type="KEGG" id="eco:b4302"/>
<dbReference type="KEGG" id="ecoc:C3026_23210"/>
<dbReference type="PATRIC" id="fig|1411691.4.peg.2395"/>
<dbReference type="EchoBASE" id="EB2442"/>
<dbReference type="eggNOG" id="COG1762">
    <property type="taxonomic scope" value="Bacteria"/>
</dbReference>
<dbReference type="HOGENOM" id="CLU_072531_2_0_6"/>
<dbReference type="InParanoid" id="P39363"/>
<dbReference type="OMA" id="GPWYILS"/>
<dbReference type="OrthoDB" id="1634238at2"/>
<dbReference type="PhylomeDB" id="P39363"/>
<dbReference type="BioCyc" id="EcoCyc:SGCA-MONOMER"/>
<dbReference type="BioCyc" id="MetaCyc:SGCA-MONOMER"/>
<dbReference type="PRO" id="PR:P39363"/>
<dbReference type="Proteomes" id="UP000000625">
    <property type="component" value="Chromosome"/>
</dbReference>
<dbReference type="GO" id="GO:0005737">
    <property type="term" value="C:cytoplasm"/>
    <property type="evidence" value="ECO:0007669"/>
    <property type="project" value="UniProtKB-SubCell"/>
</dbReference>
<dbReference type="GO" id="GO:1902495">
    <property type="term" value="C:transmembrane transporter complex"/>
    <property type="evidence" value="ECO:0000303"/>
    <property type="project" value="ComplexPortal"/>
</dbReference>
<dbReference type="GO" id="GO:0016301">
    <property type="term" value="F:kinase activity"/>
    <property type="evidence" value="ECO:0007669"/>
    <property type="project" value="UniProtKB-KW"/>
</dbReference>
<dbReference type="GO" id="GO:0090585">
    <property type="term" value="F:protein-phosphocysteine-L-ascorbate-phosphotransferase system transporter activity"/>
    <property type="evidence" value="ECO:0000318"/>
    <property type="project" value="GO_Central"/>
</dbReference>
<dbReference type="GO" id="GO:0008643">
    <property type="term" value="P:carbohydrate transport"/>
    <property type="evidence" value="ECO:0000303"/>
    <property type="project" value="ComplexPortal"/>
</dbReference>
<dbReference type="GO" id="GO:0009401">
    <property type="term" value="P:phosphoenolpyruvate-dependent sugar phosphotransferase system"/>
    <property type="evidence" value="ECO:0000318"/>
    <property type="project" value="GO_Central"/>
</dbReference>
<dbReference type="GO" id="GO:0015795">
    <property type="term" value="P:sorbitol transmembrane transport"/>
    <property type="evidence" value="ECO:0000303"/>
    <property type="project" value="ComplexPortal"/>
</dbReference>
<dbReference type="CDD" id="cd00211">
    <property type="entry name" value="PTS_IIA_fru"/>
    <property type="match status" value="1"/>
</dbReference>
<dbReference type="Gene3D" id="3.40.930.10">
    <property type="entry name" value="Mannitol-specific EII, Chain A"/>
    <property type="match status" value="1"/>
</dbReference>
<dbReference type="InterPro" id="IPR051351">
    <property type="entry name" value="Ascorbate-PTS_EIIA_comp"/>
</dbReference>
<dbReference type="InterPro" id="IPR016152">
    <property type="entry name" value="PTrfase/Anion_transptr"/>
</dbReference>
<dbReference type="InterPro" id="IPR002178">
    <property type="entry name" value="PTS_EIIA_type-2_dom"/>
</dbReference>
<dbReference type="PANTHER" id="PTHR36203">
    <property type="entry name" value="ASCORBATE-SPECIFIC PTS SYSTEM EIIA COMPONENT"/>
    <property type="match status" value="1"/>
</dbReference>
<dbReference type="PANTHER" id="PTHR36203:SF3">
    <property type="entry name" value="PHOSPHOTRANSFERASE IIA COMPONENT SGCA-RELATED"/>
    <property type="match status" value="1"/>
</dbReference>
<dbReference type="Pfam" id="PF00359">
    <property type="entry name" value="PTS_EIIA_2"/>
    <property type="match status" value="1"/>
</dbReference>
<dbReference type="SUPFAM" id="SSF55804">
    <property type="entry name" value="Phoshotransferase/anion transport protein"/>
    <property type="match status" value="1"/>
</dbReference>
<dbReference type="PROSITE" id="PS51094">
    <property type="entry name" value="PTS_EIIA_TYPE_2"/>
    <property type="match status" value="1"/>
</dbReference>
<dbReference type="PROSITE" id="PS00372">
    <property type="entry name" value="PTS_EIIA_TYPE_2_HIS"/>
    <property type="match status" value="1"/>
</dbReference>
<comment type="function">
    <text evidence="1">The phosphoenolpyruvate-dependent sugar phosphotransferase system (sugar PTS), a major carbohydrate active -transport system, catalyzes the phosphorylation of incoming sugar substrates concomitantly with their translocation across the cell membrane.</text>
</comment>
<comment type="subcellular location">
    <subcellularLocation>
        <location evidence="3">Cytoplasm</location>
    </subcellularLocation>
</comment>
<comment type="domain">
    <text>The EIIA domain is phosphorylated by phospho-HPr on a histidyl residue. Then, it transfers the phosphoryl group to the EIIB domain.</text>
</comment>
<feature type="chain" id="PRO_0000186689" description="Putative phosphotransferase IIA component SgcA">
    <location>
        <begin position="1"/>
        <end position="143"/>
    </location>
</feature>
<feature type="domain" description="PTS EIIA type-2" evidence="2">
    <location>
        <begin position="1"/>
        <end position="143"/>
    </location>
</feature>
<feature type="active site" description="Tele-phosphohistidine intermediate" evidence="2">
    <location>
        <position position="63"/>
    </location>
</feature>
<proteinExistence type="inferred from homology"/>
<sequence>MINDIKWVQAQRKATDWRQAVEIATRPLVAYGAAQPCYVNGIIENTLNWGPYYLIAPGIALPHARPEQGANYNQVSITTLRTPVAFGNEECDPVWLLLCVSATDANAHILTIQRISQFIDSPQRLTAVGNASTDDALFALVSG</sequence>
<reference key="1">
    <citation type="journal article" date="1995" name="Nucleic Acids Res.">
        <title>Analysis of the Escherichia coli genome VI: DNA sequence of the region from 92.8 through 100 minutes.</title>
        <authorList>
            <person name="Burland V.D."/>
            <person name="Plunkett G. III"/>
            <person name="Sofia H.J."/>
            <person name="Daniels D.L."/>
            <person name="Blattner F.R."/>
        </authorList>
    </citation>
    <scope>NUCLEOTIDE SEQUENCE [LARGE SCALE GENOMIC DNA]</scope>
    <source>
        <strain>K12 / MG1655 / ATCC 47076</strain>
    </source>
</reference>
<reference key="2">
    <citation type="journal article" date="1997" name="Science">
        <title>The complete genome sequence of Escherichia coli K-12.</title>
        <authorList>
            <person name="Blattner F.R."/>
            <person name="Plunkett G. III"/>
            <person name="Bloch C.A."/>
            <person name="Perna N.T."/>
            <person name="Burland V."/>
            <person name="Riley M."/>
            <person name="Collado-Vides J."/>
            <person name="Glasner J.D."/>
            <person name="Rode C.K."/>
            <person name="Mayhew G.F."/>
            <person name="Gregor J."/>
            <person name="Davis N.W."/>
            <person name="Kirkpatrick H.A."/>
            <person name="Goeden M.A."/>
            <person name="Rose D.J."/>
            <person name="Mau B."/>
            <person name="Shao Y."/>
        </authorList>
    </citation>
    <scope>NUCLEOTIDE SEQUENCE [LARGE SCALE GENOMIC DNA]</scope>
    <source>
        <strain>K12 / MG1655 / ATCC 47076</strain>
    </source>
</reference>
<reference key="3">
    <citation type="journal article" date="2006" name="Mol. Syst. Biol.">
        <title>Highly accurate genome sequences of Escherichia coli K-12 strains MG1655 and W3110.</title>
        <authorList>
            <person name="Hayashi K."/>
            <person name="Morooka N."/>
            <person name="Yamamoto Y."/>
            <person name="Fujita K."/>
            <person name="Isono K."/>
            <person name="Choi S."/>
            <person name="Ohtsubo E."/>
            <person name="Baba T."/>
            <person name="Wanner B.L."/>
            <person name="Mori H."/>
            <person name="Horiuchi T."/>
        </authorList>
    </citation>
    <scope>NUCLEOTIDE SEQUENCE [LARGE SCALE GENOMIC DNA]</scope>
    <source>
        <strain>K12 / W3110 / ATCC 27325 / DSM 5911</strain>
    </source>
</reference>
<reference key="4">
    <citation type="journal article" date="1996" name="Genome Sci. Technol.">
        <title>Novel phosphotransferases system genes revealed by bacterial genome analysis: operons encoding homologues of sugar-specific permease domains of the phosphotransferase system and pentose catabolic enzymes.</title>
        <authorList>
            <person name="Reizer J."/>
            <person name="Charbit A."/>
            <person name="Reizer A."/>
            <person name="Saier M.H. Jr."/>
        </authorList>
    </citation>
    <scope>DISCUSSION OF SEQUENCE</scope>
</reference>
<keyword id="KW-0963">Cytoplasm</keyword>
<keyword id="KW-0418">Kinase</keyword>
<keyword id="KW-0598">Phosphotransferase system</keyword>
<keyword id="KW-1185">Reference proteome</keyword>
<keyword id="KW-0762">Sugar transport</keyword>
<keyword id="KW-0808">Transferase</keyword>
<keyword id="KW-0813">Transport</keyword>
<evidence type="ECO:0000250" key="1"/>
<evidence type="ECO:0000255" key="2">
    <source>
        <dbReference type="PROSITE-ProRule" id="PRU00417"/>
    </source>
</evidence>
<evidence type="ECO:0000305" key="3"/>
<accession>P39363</accession>
<accession>Q2M613</accession>
<protein>
    <recommendedName>
        <fullName>Putative phosphotransferase IIA component SgcA</fullName>
    </recommendedName>
    <alternativeName>
        <fullName>Putative PTS system EIIA component</fullName>
    </alternativeName>
</protein>